<evidence type="ECO:0000250" key="1"/>
<evidence type="ECO:0000255" key="2"/>
<evidence type="ECO:0000256" key="3">
    <source>
        <dbReference type="SAM" id="MobiDB-lite"/>
    </source>
</evidence>
<evidence type="ECO:0000305" key="4"/>
<organism>
    <name type="scientific">Macaca fascicularis</name>
    <name type="common">Crab-eating macaque</name>
    <name type="synonym">Cynomolgus monkey</name>
    <dbReference type="NCBI Taxonomy" id="9541"/>
    <lineage>
        <taxon>Eukaryota</taxon>
        <taxon>Metazoa</taxon>
        <taxon>Chordata</taxon>
        <taxon>Craniata</taxon>
        <taxon>Vertebrata</taxon>
        <taxon>Euteleostomi</taxon>
        <taxon>Mammalia</taxon>
        <taxon>Eutheria</taxon>
        <taxon>Euarchontoglires</taxon>
        <taxon>Primates</taxon>
        <taxon>Haplorrhini</taxon>
        <taxon>Catarrhini</taxon>
        <taxon>Cercopithecidae</taxon>
        <taxon>Cercopithecinae</taxon>
        <taxon>Macaca</taxon>
    </lineage>
</organism>
<feature type="signal peptide" evidence="2">
    <location>
        <begin position="1"/>
        <end position="31"/>
    </location>
</feature>
<feature type="chain" id="PRO_0000285965" description="PILR alpha-associated neural protein">
    <location>
        <begin position="32"/>
        <end position="282"/>
    </location>
</feature>
<feature type="topological domain" description="Extracellular" evidence="2">
    <location>
        <begin position="32"/>
        <end position="178"/>
    </location>
</feature>
<feature type="transmembrane region" description="Helical" evidence="2">
    <location>
        <begin position="179"/>
        <end position="199"/>
    </location>
</feature>
<feature type="topological domain" description="Cytoplasmic" evidence="2">
    <location>
        <begin position="200"/>
        <end position="282"/>
    </location>
</feature>
<feature type="region of interest" description="Disordered" evidence="3">
    <location>
        <begin position="28"/>
        <end position="99"/>
    </location>
</feature>
<feature type="region of interest" description="Disordered" evidence="3">
    <location>
        <begin position="209"/>
        <end position="282"/>
    </location>
</feature>
<feature type="compositionally biased region" description="Low complexity" evidence="3">
    <location>
        <begin position="46"/>
        <end position="56"/>
    </location>
</feature>
<feature type="compositionally biased region" description="Polar residues" evidence="3">
    <location>
        <begin position="213"/>
        <end position="229"/>
    </location>
</feature>
<feature type="glycosylation site" description="O-linked (GalNAc...) threonine" evidence="1">
    <location>
        <position position="140"/>
    </location>
</feature>
<feature type="sequence conflict" description="In Ref. 1; BAB01625." evidence="4" ref="1">
    <original>A</original>
    <variation>V</variation>
    <location>
        <position position="85"/>
    </location>
</feature>
<name>PIANP_MACFA</name>
<comment type="function">
    <text evidence="1">Acts as a ligand for PILRA in neuronal tissues, where it may be involved in immune regulation.</text>
</comment>
<comment type="subcellular location">
    <subcellularLocation>
        <location evidence="4">Membrane</location>
        <topology evidence="4">Single-pass type I membrane protein</topology>
    </subcellularLocation>
</comment>
<comment type="PTM">
    <text evidence="1">O-glycosylation at Thr-140 is essential for recognition by PILRA.</text>
</comment>
<dbReference type="EMBL" id="AB046043">
    <property type="protein sequence ID" value="BAB01625.1"/>
    <property type="molecule type" value="mRNA"/>
</dbReference>
<dbReference type="EMBL" id="AB063097">
    <property type="protein sequence ID" value="BAB60803.1"/>
    <property type="molecule type" value="mRNA"/>
</dbReference>
<dbReference type="RefSeq" id="NP_001272338.1">
    <property type="nucleotide sequence ID" value="NM_001285409.1"/>
</dbReference>
<dbReference type="RefSeq" id="XP_005570004.1">
    <property type="nucleotide sequence ID" value="XM_005569947.2"/>
</dbReference>
<dbReference type="RefSeq" id="XP_045220572.1">
    <property type="nucleotide sequence ID" value="XM_045364637.2"/>
</dbReference>
<dbReference type="STRING" id="9541.ENSMFAP00000003576"/>
<dbReference type="GlyCosmos" id="Q95K74">
    <property type="glycosylation" value="1 site, No reported glycans"/>
</dbReference>
<dbReference type="Ensembl" id="ENSMFAT00000022237.2">
    <property type="protein sequence ID" value="ENSMFAP00000003576.1"/>
    <property type="gene ID" value="ENSMFAG00000001518.2"/>
</dbReference>
<dbReference type="GeneID" id="102118946"/>
<dbReference type="VEuPathDB" id="HostDB:ENSMFAG00000001518"/>
<dbReference type="eggNOG" id="ENOG502RH1H">
    <property type="taxonomic scope" value="Eukaryota"/>
</dbReference>
<dbReference type="GeneTree" id="ENSGT00510000049460"/>
<dbReference type="OMA" id="MEPSACR"/>
<dbReference type="Proteomes" id="UP000233100">
    <property type="component" value="Chromosome 11"/>
</dbReference>
<dbReference type="Bgee" id="ENSMFAG00000001518">
    <property type="expression patterns" value="Expressed in temporal lobe and 2 other cell types or tissues"/>
</dbReference>
<dbReference type="GO" id="GO:0016323">
    <property type="term" value="C:basolateral plasma membrane"/>
    <property type="evidence" value="ECO:0000250"/>
    <property type="project" value="UniProtKB"/>
</dbReference>
<dbReference type="GO" id="GO:0098793">
    <property type="term" value="C:presynapse"/>
    <property type="evidence" value="ECO:0007669"/>
    <property type="project" value="Ensembl"/>
</dbReference>
<dbReference type="GO" id="GO:0019904">
    <property type="term" value="F:protein domain specific binding"/>
    <property type="evidence" value="ECO:0007669"/>
    <property type="project" value="Ensembl"/>
</dbReference>
<dbReference type="GO" id="GO:0021549">
    <property type="term" value="P:cerebellum development"/>
    <property type="evidence" value="ECO:0007669"/>
    <property type="project" value="Ensembl"/>
</dbReference>
<dbReference type="GO" id="GO:0021542">
    <property type="term" value="P:dentate gyrus development"/>
    <property type="evidence" value="ECO:0007669"/>
    <property type="project" value="Ensembl"/>
</dbReference>
<dbReference type="GO" id="GO:0007214">
    <property type="term" value="P:gamma-aminobutyric acid signaling pathway"/>
    <property type="evidence" value="ECO:0007669"/>
    <property type="project" value="Ensembl"/>
</dbReference>
<dbReference type="GO" id="GO:0010467">
    <property type="term" value="P:gene expression"/>
    <property type="evidence" value="ECO:0007669"/>
    <property type="project" value="Ensembl"/>
</dbReference>
<dbReference type="GO" id="GO:0014047">
    <property type="term" value="P:glutamate secretion"/>
    <property type="evidence" value="ECO:0007669"/>
    <property type="project" value="Ensembl"/>
</dbReference>
<dbReference type="GO" id="GO:0048872">
    <property type="term" value="P:homeostasis of number of cells"/>
    <property type="evidence" value="ECO:0007669"/>
    <property type="project" value="Ensembl"/>
</dbReference>
<dbReference type="GO" id="GO:0050776">
    <property type="term" value="P:regulation of immune response"/>
    <property type="evidence" value="ECO:0007669"/>
    <property type="project" value="InterPro"/>
</dbReference>
<dbReference type="GO" id="GO:0006950">
    <property type="term" value="P:response to stress"/>
    <property type="evidence" value="ECO:0007669"/>
    <property type="project" value="Ensembl"/>
</dbReference>
<dbReference type="GO" id="GO:0035176">
    <property type="term" value="P:social behavior"/>
    <property type="evidence" value="ECO:0007669"/>
    <property type="project" value="Ensembl"/>
</dbReference>
<dbReference type="GO" id="GO:0008542">
    <property type="term" value="P:visual learning"/>
    <property type="evidence" value="ECO:0007669"/>
    <property type="project" value="Ensembl"/>
</dbReference>
<dbReference type="InterPro" id="IPR029198">
    <property type="entry name" value="AJAP1_PANP_C"/>
</dbReference>
<dbReference type="InterPro" id="IPR039628">
    <property type="entry name" value="PIANP"/>
</dbReference>
<dbReference type="PANTHER" id="PTHR32023">
    <property type="entry name" value="PILR ALPHA-ASSOCIATED NEURAL PROTEIN"/>
    <property type="match status" value="1"/>
</dbReference>
<dbReference type="PANTHER" id="PTHR32023:SF2">
    <property type="entry name" value="PILR ALPHA-ASSOCIATED NEURAL PROTEIN"/>
    <property type="match status" value="1"/>
</dbReference>
<dbReference type="Pfam" id="PF15298">
    <property type="entry name" value="AJAP1_PANP_C"/>
    <property type="match status" value="1"/>
</dbReference>
<sequence length="282" mass="30076">MESRMWPALLLSHLLPLWPLLLLPLPPPAQGSSSSPRTPPAPARPPCARGGPSAPRHVCVWERAPPPSRSPRVPRSRRQVLPGTAPPATPSGFEEGPPSSQYPWAIVWGPTVSREDGGDPNSANPGFLDYGFAAPHGLATPHPNSDSMRGDGDGLILGEAPATLRPFLFGGRGEGVDPQLYVTITISIIIVLVATGIIFKFCWDRSQKRRRPSGQQGALRQEESQQPLTDLSPAGVTVLGAFGDSPTPTPDHEEPRGGPRPGMPHPKGAPAFQLNRIPLVNL</sequence>
<proteinExistence type="evidence at transcript level"/>
<protein>
    <recommendedName>
        <fullName>PILR alpha-associated neural protein</fullName>
    </recommendedName>
    <alternativeName>
        <fullName>PILR-associating neural protein</fullName>
    </alternativeName>
    <alternativeName>
        <fullName>Paired immunoglobin-like type 2 receptor-associating neural protein</fullName>
    </alternativeName>
</protein>
<gene>
    <name type="primary">PIANP</name>
    <name type="synonym">PANP</name>
    <name type="ORF">QccE-10858</name>
    <name type="ORF">QtrA-14178</name>
</gene>
<reference key="1">
    <citation type="journal article" date="2001" name="Gene">
        <title>Assignment of 118 novel cDNAs of cynomolgus monkey brain to human chromosomes.</title>
        <authorList>
            <person name="Osada N."/>
            <person name="Hida M."/>
            <person name="Kususda J."/>
            <person name="Tanuma R."/>
            <person name="Iseki K."/>
            <person name="Hirata M."/>
            <person name="Suto Y."/>
            <person name="Hirai M."/>
            <person name="Terao K."/>
            <person name="Suzuki Y."/>
            <person name="Sugano S."/>
            <person name="Hashimoto K."/>
        </authorList>
    </citation>
    <scope>NUCLEOTIDE SEQUENCE [LARGE SCALE MRNA]</scope>
    <source>
        <tissue>Brain cortex</tissue>
    </source>
</reference>
<reference key="2">
    <citation type="submission" date="2001-06" db="EMBL/GenBank/DDBJ databases">
        <title>Isolation of full-length cDNA clones from macaque brain cDNA libraries.</title>
        <authorList>
            <person name="Osada N."/>
            <person name="Hida M."/>
            <person name="Kusuda J."/>
            <person name="Tanuma R."/>
            <person name="Iseki K."/>
            <person name="Hirai M."/>
            <person name="Terao K."/>
            <person name="Suzuki Y."/>
            <person name="Sugano S."/>
            <person name="Hashimoto K."/>
        </authorList>
    </citation>
    <scope>NUCLEOTIDE SEQUENCE [LARGE SCALE MRNA]</scope>
    <source>
        <tissue>Temporal cortex</tissue>
    </source>
</reference>
<accession>Q95K74</accession>
<accession>Q9N088</accession>
<keyword id="KW-0325">Glycoprotein</keyword>
<keyword id="KW-0472">Membrane</keyword>
<keyword id="KW-1185">Reference proteome</keyword>
<keyword id="KW-0732">Signal</keyword>
<keyword id="KW-0812">Transmembrane</keyword>
<keyword id="KW-1133">Transmembrane helix</keyword>